<evidence type="ECO:0000255" key="1">
    <source>
        <dbReference type="HAMAP-Rule" id="MF_00092"/>
    </source>
</evidence>
<accession>A7GTK1</accession>
<organism>
    <name type="scientific">Bacillus cytotoxicus (strain DSM 22905 / CIP 110041 / 391-98 / NVH 391-98)</name>
    <dbReference type="NCBI Taxonomy" id="315749"/>
    <lineage>
        <taxon>Bacteria</taxon>
        <taxon>Bacillati</taxon>
        <taxon>Bacillota</taxon>
        <taxon>Bacilli</taxon>
        <taxon>Bacillales</taxon>
        <taxon>Bacillaceae</taxon>
        <taxon>Bacillus</taxon>
        <taxon>Bacillus cereus group</taxon>
    </lineage>
</organism>
<protein>
    <recommendedName>
        <fullName evidence="1">Endonuclease MutS2</fullName>
        <ecNumber evidence="1">3.1.-.-</ecNumber>
    </recommendedName>
    <alternativeName>
        <fullName evidence="1">Ribosome-associated protein quality control-upstream factor</fullName>
        <shortName evidence="1">RQC-upstream factor</shortName>
        <shortName evidence="1">RqcU</shortName>
        <ecNumber evidence="1">3.6.4.-</ecNumber>
    </alternativeName>
</protein>
<name>MUTS2_BACCN</name>
<proteinExistence type="inferred from homology"/>
<reference key="1">
    <citation type="journal article" date="2008" name="Chem. Biol. Interact.">
        <title>Extending the Bacillus cereus group genomics to putative food-borne pathogens of different toxicity.</title>
        <authorList>
            <person name="Lapidus A."/>
            <person name="Goltsman E."/>
            <person name="Auger S."/>
            <person name="Galleron N."/>
            <person name="Segurens B."/>
            <person name="Dossat C."/>
            <person name="Land M.L."/>
            <person name="Broussolle V."/>
            <person name="Brillard J."/>
            <person name="Guinebretiere M.-H."/>
            <person name="Sanchis V."/>
            <person name="Nguen-the C."/>
            <person name="Lereclus D."/>
            <person name="Richardson P."/>
            <person name="Wincker P."/>
            <person name="Weissenbach J."/>
            <person name="Ehrlich S.D."/>
            <person name="Sorokin A."/>
        </authorList>
    </citation>
    <scope>NUCLEOTIDE SEQUENCE [LARGE SCALE GENOMIC DNA]</scope>
    <source>
        <strain>DSM 22905 / CIP 110041 / 391-98 / NVH 391-98</strain>
    </source>
</reference>
<feature type="chain" id="PRO_1000075469" description="Endonuclease MutS2">
    <location>
        <begin position="1"/>
        <end position="786"/>
    </location>
</feature>
<feature type="domain" description="Smr" evidence="1">
    <location>
        <begin position="711"/>
        <end position="786"/>
    </location>
</feature>
<feature type="binding site" evidence="1">
    <location>
        <begin position="335"/>
        <end position="342"/>
    </location>
    <ligand>
        <name>ATP</name>
        <dbReference type="ChEBI" id="CHEBI:30616"/>
    </ligand>
</feature>
<comment type="function">
    <text evidence="1">Endonuclease that is involved in the suppression of homologous recombination and thus may have a key role in the control of bacterial genetic diversity.</text>
</comment>
<comment type="function">
    <text evidence="1">Acts as a ribosome collision sensor, splitting the ribosome into its 2 subunits. Detects stalled/collided 70S ribosomes which it binds and splits by an ATP-hydrolysis driven conformational change. Acts upstream of the ribosome quality control system (RQC), a ribosome-associated complex that mediates the extraction of incompletely synthesized nascent chains from stalled ribosomes and their subsequent degradation. Probably generates substrates for RQC.</text>
</comment>
<comment type="subunit">
    <text evidence="1">Homodimer. Binds to stalled ribosomes, contacting rRNA.</text>
</comment>
<comment type="similarity">
    <text evidence="1">Belongs to the DNA mismatch repair MutS family. MutS2 subfamily.</text>
</comment>
<gene>
    <name evidence="1" type="primary">mutS2</name>
    <name evidence="1" type="synonym">rqcU</name>
    <name type="ordered locus">Bcer98_3240</name>
</gene>
<keyword id="KW-0067">ATP-binding</keyword>
<keyword id="KW-0238">DNA-binding</keyword>
<keyword id="KW-0255">Endonuclease</keyword>
<keyword id="KW-0378">Hydrolase</keyword>
<keyword id="KW-0540">Nuclease</keyword>
<keyword id="KW-0547">Nucleotide-binding</keyword>
<keyword id="KW-0694">RNA-binding</keyword>
<keyword id="KW-0699">rRNA-binding</keyword>
<sequence>MLERTLRVLEYDKVKEQLLEHTASSLGRDKVKRLMPSTDFEEIVEMQDTTDEAAKVIRLKGHAPLGGIFDIRSNVKRAKIGSMLSPHELLDIASTMYGSRQMKRFIEDIVDNGAQLPILETHVAQIVSLYDLEKKITGCIGDGGEVLDSASDKLRGIRNQIRTAESRIREKLENMTRSSNAQKMLSDAIVTIRNDRYVIPVKQEYRGVYGGIVHDQSASGQTLFIEPQVIVELNNALQEARVKEKQEVERILMMLTEEVAAEADIVLANVEVIANLDFIFAKALYAKRMKATKPIVNNERYMELRQARHPLIDPKVIVPNDIVLGKDFTTIVITGPNTGGKTVTLKTVGICVLMAQSGLHIPVQEESEICVFKNIFADIGDEQSIEQSLSTFSSHMVNIVDILEKADFESLVLFDELGAGTDPQEGAALAISILDEVHNRGARVVATTHYPELKAYGYNRNQVINASVEFDVNTLSPTYKLLIGVPGRSNAFEISKRLGLSERVINRARNHISTDTNKIENMIAKLEESQKNAERDWKEAEELRKQSEKLHRELQRQIIEFNEERDERLLKAQKEGEEKVEAAKKEAEAIIRELRQLRKAQLANVKDHELIEAKSRLEGAAPELVKKQKVKVKNTAPKQQLRPGDEVKVLTFGQKGQLLKKVSDSEWNVQIGILKMKVKESDMEYINTPKQLEKKAVATVKGRDYHVSLELDLRGERFENAMMRVEKYLDDAQLANYPRVSIIHGKGTGALRQGVQDYLKNHRGVKSFRYGDMGEGGLGVTVVELK</sequence>
<dbReference type="EC" id="3.1.-.-" evidence="1"/>
<dbReference type="EC" id="3.6.4.-" evidence="1"/>
<dbReference type="EMBL" id="CP000764">
    <property type="protein sequence ID" value="ABS23459.1"/>
    <property type="molecule type" value="Genomic_DNA"/>
</dbReference>
<dbReference type="RefSeq" id="WP_012095698.1">
    <property type="nucleotide sequence ID" value="NC_009674.1"/>
</dbReference>
<dbReference type="SMR" id="A7GTK1"/>
<dbReference type="STRING" id="315749.Bcer98_3240"/>
<dbReference type="GeneID" id="33898486"/>
<dbReference type="KEGG" id="bcy:Bcer98_3240"/>
<dbReference type="eggNOG" id="COG1193">
    <property type="taxonomic scope" value="Bacteria"/>
</dbReference>
<dbReference type="HOGENOM" id="CLU_011252_2_1_9"/>
<dbReference type="OrthoDB" id="9808166at2"/>
<dbReference type="Proteomes" id="UP000002300">
    <property type="component" value="Chromosome"/>
</dbReference>
<dbReference type="GO" id="GO:0005524">
    <property type="term" value="F:ATP binding"/>
    <property type="evidence" value="ECO:0007669"/>
    <property type="project" value="UniProtKB-UniRule"/>
</dbReference>
<dbReference type="GO" id="GO:0016887">
    <property type="term" value="F:ATP hydrolysis activity"/>
    <property type="evidence" value="ECO:0007669"/>
    <property type="project" value="InterPro"/>
</dbReference>
<dbReference type="GO" id="GO:0140664">
    <property type="term" value="F:ATP-dependent DNA damage sensor activity"/>
    <property type="evidence" value="ECO:0007669"/>
    <property type="project" value="InterPro"/>
</dbReference>
<dbReference type="GO" id="GO:0004519">
    <property type="term" value="F:endonuclease activity"/>
    <property type="evidence" value="ECO:0007669"/>
    <property type="project" value="UniProtKB-UniRule"/>
</dbReference>
<dbReference type="GO" id="GO:0030983">
    <property type="term" value="F:mismatched DNA binding"/>
    <property type="evidence" value="ECO:0007669"/>
    <property type="project" value="InterPro"/>
</dbReference>
<dbReference type="GO" id="GO:0043023">
    <property type="term" value="F:ribosomal large subunit binding"/>
    <property type="evidence" value="ECO:0007669"/>
    <property type="project" value="UniProtKB-UniRule"/>
</dbReference>
<dbReference type="GO" id="GO:0019843">
    <property type="term" value="F:rRNA binding"/>
    <property type="evidence" value="ECO:0007669"/>
    <property type="project" value="UniProtKB-UniRule"/>
</dbReference>
<dbReference type="GO" id="GO:0006298">
    <property type="term" value="P:mismatch repair"/>
    <property type="evidence" value="ECO:0007669"/>
    <property type="project" value="InterPro"/>
</dbReference>
<dbReference type="GO" id="GO:0045910">
    <property type="term" value="P:negative regulation of DNA recombination"/>
    <property type="evidence" value="ECO:0007669"/>
    <property type="project" value="InterPro"/>
</dbReference>
<dbReference type="GO" id="GO:0072344">
    <property type="term" value="P:rescue of stalled ribosome"/>
    <property type="evidence" value="ECO:0007669"/>
    <property type="project" value="UniProtKB-UniRule"/>
</dbReference>
<dbReference type="CDD" id="cd03280">
    <property type="entry name" value="ABC_MutS2"/>
    <property type="match status" value="1"/>
</dbReference>
<dbReference type="CDD" id="cd06503">
    <property type="entry name" value="ATP-synt_Fo_b"/>
    <property type="match status" value="1"/>
</dbReference>
<dbReference type="FunFam" id="3.40.50.300:FF:000830">
    <property type="entry name" value="Endonuclease MutS2"/>
    <property type="match status" value="1"/>
</dbReference>
<dbReference type="Gene3D" id="1.10.1420.10">
    <property type="match status" value="2"/>
</dbReference>
<dbReference type="Gene3D" id="3.30.1370.110">
    <property type="match status" value="1"/>
</dbReference>
<dbReference type="Gene3D" id="3.40.50.300">
    <property type="entry name" value="P-loop containing nucleotide triphosphate hydrolases"/>
    <property type="match status" value="1"/>
</dbReference>
<dbReference type="HAMAP" id="MF_00092">
    <property type="entry name" value="MutS2"/>
    <property type="match status" value="1"/>
</dbReference>
<dbReference type="InterPro" id="IPR000432">
    <property type="entry name" value="DNA_mismatch_repair_MutS_C"/>
</dbReference>
<dbReference type="InterPro" id="IPR007696">
    <property type="entry name" value="DNA_mismatch_repair_MutS_core"/>
</dbReference>
<dbReference type="InterPro" id="IPR036187">
    <property type="entry name" value="DNA_mismatch_repair_MutS_sf"/>
</dbReference>
<dbReference type="InterPro" id="IPR046893">
    <property type="entry name" value="MSSS"/>
</dbReference>
<dbReference type="InterPro" id="IPR045076">
    <property type="entry name" value="MutS"/>
</dbReference>
<dbReference type="InterPro" id="IPR005747">
    <property type="entry name" value="MutS2"/>
</dbReference>
<dbReference type="InterPro" id="IPR027417">
    <property type="entry name" value="P-loop_NTPase"/>
</dbReference>
<dbReference type="InterPro" id="IPR002625">
    <property type="entry name" value="Smr_dom"/>
</dbReference>
<dbReference type="InterPro" id="IPR036063">
    <property type="entry name" value="Smr_dom_sf"/>
</dbReference>
<dbReference type="NCBIfam" id="TIGR01069">
    <property type="entry name" value="mutS2"/>
    <property type="match status" value="1"/>
</dbReference>
<dbReference type="PANTHER" id="PTHR48466:SF2">
    <property type="entry name" value="OS10G0509000 PROTEIN"/>
    <property type="match status" value="1"/>
</dbReference>
<dbReference type="PANTHER" id="PTHR48466">
    <property type="entry name" value="OS10G0509000 PROTEIN-RELATED"/>
    <property type="match status" value="1"/>
</dbReference>
<dbReference type="Pfam" id="PF20297">
    <property type="entry name" value="MSSS"/>
    <property type="match status" value="1"/>
</dbReference>
<dbReference type="Pfam" id="PF00488">
    <property type="entry name" value="MutS_V"/>
    <property type="match status" value="1"/>
</dbReference>
<dbReference type="Pfam" id="PF01713">
    <property type="entry name" value="Smr"/>
    <property type="match status" value="1"/>
</dbReference>
<dbReference type="PIRSF" id="PIRSF005814">
    <property type="entry name" value="MutS_YshD"/>
    <property type="match status" value="1"/>
</dbReference>
<dbReference type="SMART" id="SM00534">
    <property type="entry name" value="MUTSac"/>
    <property type="match status" value="1"/>
</dbReference>
<dbReference type="SMART" id="SM00533">
    <property type="entry name" value="MUTSd"/>
    <property type="match status" value="1"/>
</dbReference>
<dbReference type="SMART" id="SM00463">
    <property type="entry name" value="SMR"/>
    <property type="match status" value="1"/>
</dbReference>
<dbReference type="SUPFAM" id="SSF48334">
    <property type="entry name" value="DNA repair protein MutS, domain III"/>
    <property type="match status" value="1"/>
</dbReference>
<dbReference type="SUPFAM" id="SSF52540">
    <property type="entry name" value="P-loop containing nucleoside triphosphate hydrolases"/>
    <property type="match status" value="1"/>
</dbReference>
<dbReference type="SUPFAM" id="SSF160443">
    <property type="entry name" value="SMR domain-like"/>
    <property type="match status" value="1"/>
</dbReference>
<dbReference type="PROSITE" id="PS00486">
    <property type="entry name" value="DNA_MISMATCH_REPAIR_2"/>
    <property type="match status" value="1"/>
</dbReference>
<dbReference type="PROSITE" id="PS50828">
    <property type="entry name" value="SMR"/>
    <property type="match status" value="1"/>
</dbReference>